<feature type="peptide" id="PRO_0000043892" description="Sulfakinin">
    <location>
        <begin position="1"/>
        <end position="12"/>
    </location>
</feature>
<feature type="modified residue" description="Pyrrolidone carboxylic acid" evidence="2">
    <location>
        <position position="1"/>
    </location>
</feature>
<feature type="modified residue" description="Sulfotyrosine" evidence="1">
    <location>
        <position position="7"/>
    </location>
</feature>
<feature type="modified residue" description="Phenylalanine amide" evidence="2">
    <location>
        <position position="12"/>
    </location>
</feature>
<proteinExistence type="evidence at protein level"/>
<sequence>QLASDDYGHMRF</sequence>
<protein>
    <recommendedName>
        <fullName>Sulfakinin</fullName>
        <shortName>Lom-SK</shortName>
    </recommendedName>
</protein>
<evidence type="ECO:0000250" key="1">
    <source>
        <dbReference type="UniProtKB" id="P85847"/>
    </source>
</evidence>
<evidence type="ECO:0000269" key="2">
    <source ref="1"/>
</evidence>
<evidence type="ECO:0000305" key="3"/>
<comment type="function">
    <text>Myotropic peptide.</text>
</comment>
<comment type="subcellular location">
    <subcellularLocation>
        <location>Secreted</location>
    </subcellularLocation>
</comment>
<comment type="similarity">
    <text evidence="3">Belongs to the gastrin/cholecystokinin family.</text>
</comment>
<accession>P47733</accession>
<dbReference type="GO" id="GO:0005576">
    <property type="term" value="C:extracellular region"/>
    <property type="evidence" value="ECO:0007669"/>
    <property type="project" value="UniProtKB-SubCell"/>
</dbReference>
<dbReference type="GO" id="GO:0005179">
    <property type="term" value="F:hormone activity"/>
    <property type="evidence" value="ECO:0007669"/>
    <property type="project" value="UniProtKB-KW"/>
</dbReference>
<dbReference type="GO" id="GO:0007218">
    <property type="term" value="P:neuropeptide signaling pathway"/>
    <property type="evidence" value="ECO:0007669"/>
    <property type="project" value="UniProtKB-KW"/>
</dbReference>
<dbReference type="InterPro" id="IPR013152">
    <property type="entry name" value="Gastrin/cholecystokinin_CS"/>
</dbReference>
<dbReference type="InterPro" id="IPR013259">
    <property type="entry name" value="Sulfakinin"/>
</dbReference>
<dbReference type="Pfam" id="PF08257">
    <property type="entry name" value="Sulfakinin"/>
    <property type="match status" value="1"/>
</dbReference>
<dbReference type="PROSITE" id="PS00259">
    <property type="entry name" value="GASTRIN"/>
    <property type="match status" value="1"/>
</dbReference>
<keyword id="KW-0027">Amidation</keyword>
<keyword id="KW-0903">Direct protein sequencing</keyword>
<keyword id="KW-0372">Hormone</keyword>
<keyword id="KW-0527">Neuropeptide</keyword>
<keyword id="KW-0873">Pyrrolidone carboxylic acid</keyword>
<keyword id="KW-0964">Secreted</keyword>
<keyword id="KW-0765">Sulfation</keyword>
<reference key="1">
    <citation type="book" date="1990" name="Chromatography and isolation of insect hormones and pheromones">
        <editorList>
            <person name="McCaffery A."/>
            <person name="Wilson I."/>
        </editorList>
        <authorList>
            <person name="Schoofs L."/>
            <person name="Holman G.L."/>
            <person name="Hayes T.K."/>
            <person name="Nachman R.J."/>
            <person name="de Loof A."/>
        </authorList>
    </citation>
    <scope>PROTEIN SEQUENCE</scope>
    <scope>PYROGLUTAMATE FORMATION AT GLN-1</scope>
    <scope>AMIDATION AT PHE-12</scope>
    <source>
        <tissue>Brain</tissue>
    </source>
</reference>
<organism>
    <name type="scientific">Locusta migratoria</name>
    <name type="common">Migratory locust</name>
    <dbReference type="NCBI Taxonomy" id="7004"/>
    <lineage>
        <taxon>Eukaryota</taxon>
        <taxon>Metazoa</taxon>
        <taxon>Ecdysozoa</taxon>
        <taxon>Arthropoda</taxon>
        <taxon>Hexapoda</taxon>
        <taxon>Insecta</taxon>
        <taxon>Pterygota</taxon>
        <taxon>Neoptera</taxon>
        <taxon>Polyneoptera</taxon>
        <taxon>Orthoptera</taxon>
        <taxon>Caelifera</taxon>
        <taxon>Acrididea</taxon>
        <taxon>Acridomorpha</taxon>
        <taxon>Acridoidea</taxon>
        <taxon>Acrididae</taxon>
        <taxon>Oedipodinae</taxon>
        <taxon>Locusta</taxon>
    </lineage>
</organism>
<name>LOSK_LOCMI</name>